<sequence>MWNEFKKFAFKGNVIDLAVGVVIGAAFGKIVSSLVKDIITPLLGMVLGGVDFTGLKITFGKASIMYGKFIQTIFDFLIIAAAIFMFVKVFNKLTSKREEEKEEELPEPTKEEELLGEIRDLLKQQNSSKDRA</sequence>
<dbReference type="EMBL" id="CP000485">
    <property type="protein sequence ID" value="ABK87459.1"/>
    <property type="molecule type" value="Genomic_DNA"/>
</dbReference>
<dbReference type="RefSeq" id="WP_000267006.1">
    <property type="nucleotide sequence ID" value="NC_008600.1"/>
</dbReference>
<dbReference type="SMR" id="A0RJR6"/>
<dbReference type="KEGG" id="btl:BALH_4252"/>
<dbReference type="HOGENOM" id="CLU_095787_0_0_9"/>
<dbReference type="GO" id="GO:0005886">
    <property type="term" value="C:plasma membrane"/>
    <property type="evidence" value="ECO:0007669"/>
    <property type="project" value="UniProtKB-SubCell"/>
</dbReference>
<dbReference type="GO" id="GO:0008381">
    <property type="term" value="F:mechanosensitive monoatomic ion channel activity"/>
    <property type="evidence" value="ECO:0007669"/>
    <property type="project" value="UniProtKB-UniRule"/>
</dbReference>
<dbReference type="FunFam" id="1.10.1200.120:FF:000001">
    <property type="entry name" value="Large-conductance mechanosensitive channel"/>
    <property type="match status" value="1"/>
</dbReference>
<dbReference type="Gene3D" id="1.10.1200.120">
    <property type="entry name" value="Large-conductance mechanosensitive channel, MscL, domain 1"/>
    <property type="match status" value="1"/>
</dbReference>
<dbReference type="HAMAP" id="MF_00115">
    <property type="entry name" value="MscL"/>
    <property type="match status" value="1"/>
</dbReference>
<dbReference type="InterPro" id="IPR019823">
    <property type="entry name" value="Mechanosensitive_channel_CS"/>
</dbReference>
<dbReference type="InterPro" id="IPR001185">
    <property type="entry name" value="MS_channel"/>
</dbReference>
<dbReference type="InterPro" id="IPR037673">
    <property type="entry name" value="MSC/AndL"/>
</dbReference>
<dbReference type="InterPro" id="IPR036019">
    <property type="entry name" value="MscL_channel"/>
</dbReference>
<dbReference type="NCBIfam" id="TIGR00220">
    <property type="entry name" value="mscL"/>
    <property type="match status" value="1"/>
</dbReference>
<dbReference type="NCBIfam" id="NF001843">
    <property type="entry name" value="PRK00567.1-4"/>
    <property type="match status" value="1"/>
</dbReference>
<dbReference type="NCBIfam" id="NF010560">
    <property type="entry name" value="PRK13955.1"/>
    <property type="match status" value="1"/>
</dbReference>
<dbReference type="PANTHER" id="PTHR30266:SF2">
    <property type="entry name" value="LARGE-CONDUCTANCE MECHANOSENSITIVE CHANNEL"/>
    <property type="match status" value="1"/>
</dbReference>
<dbReference type="PANTHER" id="PTHR30266">
    <property type="entry name" value="MECHANOSENSITIVE CHANNEL MSCL"/>
    <property type="match status" value="1"/>
</dbReference>
<dbReference type="Pfam" id="PF01741">
    <property type="entry name" value="MscL"/>
    <property type="match status" value="1"/>
</dbReference>
<dbReference type="PRINTS" id="PR01264">
    <property type="entry name" value="MECHCHANNEL"/>
</dbReference>
<dbReference type="SUPFAM" id="SSF81330">
    <property type="entry name" value="Gated mechanosensitive channel"/>
    <property type="match status" value="1"/>
</dbReference>
<dbReference type="PROSITE" id="PS01327">
    <property type="entry name" value="MSCL"/>
    <property type="match status" value="1"/>
</dbReference>
<name>MSCL_BACAH</name>
<gene>
    <name evidence="1" type="primary">mscL</name>
    <name type="ordered locus">BALH_4252</name>
</gene>
<comment type="function">
    <text evidence="1">Channel that opens in response to stretch forces in the membrane lipid bilayer. May participate in the regulation of osmotic pressure changes within the cell.</text>
</comment>
<comment type="subunit">
    <text evidence="1">Homopentamer.</text>
</comment>
<comment type="subcellular location">
    <subcellularLocation>
        <location evidence="1">Cell membrane</location>
        <topology evidence="1">Multi-pass membrane protein</topology>
    </subcellularLocation>
</comment>
<comment type="similarity">
    <text evidence="1">Belongs to the MscL family.</text>
</comment>
<proteinExistence type="inferred from homology"/>
<evidence type="ECO:0000255" key="1">
    <source>
        <dbReference type="HAMAP-Rule" id="MF_00115"/>
    </source>
</evidence>
<protein>
    <recommendedName>
        <fullName evidence="1">Large-conductance mechanosensitive channel</fullName>
    </recommendedName>
</protein>
<accession>A0RJR6</accession>
<reference key="1">
    <citation type="journal article" date="2007" name="J. Bacteriol.">
        <title>The complete genome sequence of Bacillus thuringiensis Al Hakam.</title>
        <authorList>
            <person name="Challacombe J.F."/>
            <person name="Altherr M.R."/>
            <person name="Xie G."/>
            <person name="Bhotika S.S."/>
            <person name="Brown N."/>
            <person name="Bruce D."/>
            <person name="Campbell C.S."/>
            <person name="Campbell M.L."/>
            <person name="Chen J."/>
            <person name="Chertkov O."/>
            <person name="Cleland C."/>
            <person name="Dimitrijevic M."/>
            <person name="Doggett N.A."/>
            <person name="Fawcett J.J."/>
            <person name="Glavina T."/>
            <person name="Goodwin L.A."/>
            <person name="Green L.D."/>
            <person name="Han C.S."/>
            <person name="Hill K.K."/>
            <person name="Hitchcock P."/>
            <person name="Jackson P.J."/>
            <person name="Keim P."/>
            <person name="Kewalramani A.R."/>
            <person name="Longmire J."/>
            <person name="Lucas S."/>
            <person name="Malfatti S."/>
            <person name="Martinez D."/>
            <person name="McMurry K."/>
            <person name="Meincke L.J."/>
            <person name="Misra M."/>
            <person name="Moseman B.L."/>
            <person name="Mundt M."/>
            <person name="Munk A.C."/>
            <person name="Okinaka R.T."/>
            <person name="Parson-Quintana B."/>
            <person name="Reilly L.P."/>
            <person name="Richardson P."/>
            <person name="Robinson D.L."/>
            <person name="Saunders E."/>
            <person name="Tapia R."/>
            <person name="Tesmer J.G."/>
            <person name="Thayer N."/>
            <person name="Thompson L.S."/>
            <person name="Tice H."/>
            <person name="Ticknor L.O."/>
            <person name="Wills P.L."/>
            <person name="Gilna P."/>
            <person name="Brettin T.S."/>
        </authorList>
    </citation>
    <scope>NUCLEOTIDE SEQUENCE [LARGE SCALE GENOMIC DNA]</scope>
    <source>
        <strain>Al Hakam</strain>
    </source>
</reference>
<keyword id="KW-1003">Cell membrane</keyword>
<keyword id="KW-0407">Ion channel</keyword>
<keyword id="KW-0406">Ion transport</keyword>
<keyword id="KW-0472">Membrane</keyword>
<keyword id="KW-0812">Transmembrane</keyword>
<keyword id="KW-1133">Transmembrane helix</keyword>
<keyword id="KW-0813">Transport</keyword>
<organism>
    <name type="scientific">Bacillus thuringiensis (strain Al Hakam)</name>
    <dbReference type="NCBI Taxonomy" id="412694"/>
    <lineage>
        <taxon>Bacteria</taxon>
        <taxon>Bacillati</taxon>
        <taxon>Bacillota</taxon>
        <taxon>Bacilli</taxon>
        <taxon>Bacillales</taxon>
        <taxon>Bacillaceae</taxon>
        <taxon>Bacillus</taxon>
        <taxon>Bacillus cereus group</taxon>
    </lineage>
</organism>
<feature type="chain" id="PRO_1000015352" description="Large-conductance mechanosensitive channel">
    <location>
        <begin position="1"/>
        <end position="132"/>
    </location>
</feature>
<feature type="transmembrane region" description="Helical" evidence="1">
    <location>
        <begin position="14"/>
        <end position="34"/>
    </location>
</feature>
<feature type="transmembrane region" description="Helical" evidence="1">
    <location>
        <begin position="38"/>
        <end position="58"/>
    </location>
</feature>
<feature type="transmembrane region" description="Helical" evidence="1">
    <location>
        <begin position="69"/>
        <end position="89"/>
    </location>
</feature>